<protein>
    <recommendedName>
        <fullName evidence="3">Dehydratase ustZ</fullName>
        <ecNumber evidence="5">1.-.-.-</ecNumber>
    </recommendedName>
    <alternativeName>
        <fullName evidence="3">Ustilaginoidins biosynthesis cluster protein Z</fullName>
    </alternativeName>
</protein>
<proteinExistence type="inferred from homology"/>
<name>USTZ_USTVR</name>
<sequence>MASHHQLLCLNILGFRKPGISTEDYRNYMVNVHAPLVAGLMEKYGFLHFTMSHASEQSPQLMDQLYDAQFANTASYDCCVQIVFPSIECFVNMKADPYFKQTVGPDHEKFADTKRSQMMIGWFSPLLINGQQTDSLSAAE</sequence>
<dbReference type="EC" id="1.-.-.-" evidence="5"/>
<dbReference type="EMBL" id="BBTG02000019">
    <property type="protein sequence ID" value="GAO19111.1"/>
    <property type="molecule type" value="Genomic_DNA"/>
</dbReference>
<dbReference type="SMR" id="A0A063C1W0"/>
<dbReference type="STRING" id="1159556.A0A063C1W0"/>
<dbReference type="HOGENOM" id="CLU_115019_0_0_1"/>
<dbReference type="OrthoDB" id="3454835at2759"/>
<dbReference type="Proteomes" id="UP000054053">
    <property type="component" value="Unassembled WGS sequence"/>
</dbReference>
<dbReference type="GO" id="GO:0004497">
    <property type="term" value="F:monooxygenase activity"/>
    <property type="evidence" value="ECO:0007669"/>
    <property type="project" value="UniProtKB-KW"/>
</dbReference>
<dbReference type="Gene3D" id="3.30.70.100">
    <property type="match status" value="1"/>
</dbReference>
<dbReference type="InterPro" id="IPR011008">
    <property type="entry name" value="Dimeric_a/b-barrel"/>
</dbReference>
<dbReference type="InterPro" id="IPR009799">
    <property type="entry name" value="EthD_dom"/>
</dbReference>
<dbReference type="Pfam" id="PF07110">
    <property type="entry name" value="EthD"/>
    <property type="match status" value="1"/>
</dbReference>
<dbReference type="SUPFAM" id="SSF54909">
    <property type="entry name" value="Dimeric alpha+beta barrel"/>
    <property type="match status" value="1"/>
</dbReference>
<feature type="chain" id="PRO_0000448923" description="Dehydratase ustZ">
    <location>
        <begin position="1"/>
        <end position="140"/>
    </location>
</feature>
<feature type="domain" description="EthD" evidence="1">
    <location>
        <begin position="18"/>
        <end position="113"/>
    </location>
</feature>
<organism>
    <name type="scientific">Ustilaginoidea virens</name>
    <name type="common">Rice false smut fungus</name>
    <name type="synonym">Villosiclava virens</name>
    <dbReference type="NCBI Taxonomy" id="1159556"/>
    <lineage>
        <taxon>Eukaryota</taxon>
        <taxon>Fungi</taxon>
        <taxon>Dikarya</taxon>
        <taxon>Ascomycota</taxon>
        <taxon>Pezizomycotina</taxon>
        <taxon>Sordariomycetes</taxon>
        <taxon>Hypocreomycetidae</taxon>
        <taxon>Hypocreales</taxon>
        <taxon>Clavicipitaceae</taxon>
        <taxon>Ustilaginoidea</taxon>
    </lineage>
</organism>
<reference key="1">
    <citation type="journal article" date="2016" name="Genome Announc.">
        <title>Genome sequence of Ustilaginoidea virens IPU010, a rice pathogenic fungus causing false smut.</title>
        <authorList>
            <person name="Kumagai T."/>
            <person name="Ishii T."/>
            <person name="Terai G."/>
            <person name="Umemura M."/>
            <person name="Machida M."/>
            <person name="Asai K."/>
        </authorList>
    </citation>
    <scope>NUCLEOTIDE SEQUENCE [LARGE SCALE GENOMIC DNA]</scope>
    <source>
        <strain>IPU010</strain>
    </source>
</reference>
<reference key="2">
    <citation type="journal article" date="2019" name="Angew. Chem. Int. Ed.">
        <title>Enantioselective phenol coupling by laccases in the biosynthesis of fungal dimeric naphthopyrones.</title>
        <authorList>
            <person name="Obermaier S."/>
            <person name="Thiele W."/>
            <person name="Fuertges L."/>
            <person name="Mueller M."/>
        </authorList>
    </citation>
    <scope>FUNCTION</scope>
    <scope>PATHWAY</scope>
    <source>
        <strain>IPU010</strain>
    </source>
</reference>
<accession>A0A063C1W0</accession>
<evidence type="ECO:0000255" key="1"/>
<evidence type="ECO:0000269" key="2">
    <source>
    </source>
</evidence>
<evidence type="ECO:0000303" key="3">
    <source>
    </source>
</evidence>
<evidence type="ECO:0000305" key="4"/>
<evidence type="ECO:0000305" key="5">
    <source>
    </source>
</evidence>
<gene>
    <name evidence="3" type="primary">ustZ</name>
    <name type="ORF">UVI_02036170</name>
</gene>
<comment type="function">
    <text evidence="2 5">Dehydratase; part of the gene cluster that mediates the biosynthesis of ustilaginoidins, dimeric gamma-naphthopyrones isolated from different fungal species (PubMed:31050129). The first step in the biosynthesis of ustilaginoidins is the production of gamma-naphthopyrone precursor YWA1 by the non-reducing polyketide synthase ustP, via condensation of one acetyl-CoA starter unit with 6 malonyl-CoA units (PubMed:31050129). YWA1 is then probably substrate of the ustZ to yield norrubrofusarin via a dehydration reaction (Probable). A key enzyme in the biosynthetic pathway is the laccase ustL, which catalyzes the oxidative dimerization of norrubrofusarin to ustilaginoidin A (PubMed:31050129). It can produce the M- and P-atropisomers in varying amounts, depending on the reaction conditions (PubMed:31050129). For the biosynthesis of 3-methylustilaginoid in derivatives such as chaetochromin A, a methylated derivative of YWA1 is required (Probable). The C-methylation is considered to be catalyzed by ustM, the phosphopantetheine attachment site of which indicates that it acts on the growing polyketide chain before release of the product (Probable). For the biosynthesis of chaetochromin A, it is assumed that saturation of the D2 double bond takes place before dimerization, and is probably catalyzed by an external reductase because no candidate gene was identified within the cluster (Probable).</text>
</comment>
<comment type="catalytic activity">
    <reaction evidence="5">
        <text>naphtopyrone YWA1 = norrubrofusarin + H2O + H(+)</text>
        <dbReference type="Rhea" id="RHEA:62680"/>
        <dbReference type="ChEBI" id="CHEBI:15377"/>
        <dbReference type="ChEBI" id="CHEBI:15378"/>
        <dbReference type="ChEBI" id="CHEBI:133763"/>
        <dbReference type="ChEBI" id="CHEBI:145839"/>
    </reaction>
    <physiologicalReaction direction="left-to-right" evidence="5">
        <dbReference type="Rhea" id="RHEA:62681"/>
    </physiologicalReaction>
</comment>
<comment type="pathway">
    <text evidence="5">Secondary metabolite biosynthesis.</text>
</comment>
<comment type="similarity">
    <text evidence="4">Belongs to the tpcK family.</text>
</comment>
<keyword id="KW-0503">Monooxygenase</keyword>
<keyword id="KW-0560">Oxidoreductase</keyword>